<keyword id="KW-0027">Amidation</keyword>
<keyword id="KW-0903">Direct protein sequencing</keyword>
<keyword id="KW-0527">Neuropeptide</keyword>
<keyword id="KW-0964">Secreted</keyword>
<reference key="1">
    <citation type="journal article" date="1977" name="Science">
        <title>Structure of a molluscan cardioexcitatory neuropeptide.</title>
        <authorList>
            <person name="Price D.A."/>
            <person name="Greenberg M.J."/>
        </authorList>
    </citation>
    <scope>PROTEIN SEQUENCE</scope>
    <scope>FUNCTION</scope>
    <scope>AMIDATION AT PHE-4</scope>
    <scope>SYNTHESIS</scope>
    <scope>SUBCELLULAR LOCATION</scope>
    <source>
        <tissue>Cerebral pedal</tissue>
        <tissue>Ganglion</tissue>
    </source>
</reference>
<reference key="2">
    <citation type="journal article" date="1977" name="Prep. Biochem.">
        <title>Purification and characterization of a cardioexcitatory neuropeptide from the central ganglia of a bivalve mollusc.</title>
        <authorList>
            <person name="Price D.A."/>
            <person name="Greenberg M.J."/>
        </authorList>
    </citation>
    <scope>PROTEIN SEQUENCE</scope>
    <scope>FUNCTION</scope>
    <scope>SUBCELLULAR LOCATION</scope>
    <source>
        <tissue>Ganglion</tissue>
    </source>
</reference>
<name>FMRF_MACNI</name>
<sequence>FMRF</sequence>
<accession>P69145</accession>
<accession>P01162</accession>
<protein>
    <recommendedName>
        <fullName evidence="3 4">FMRFamide</fullName>
    </recommendedName>
    <alternativeName>
        <fullName evidence="3 4">Cardioexcitatory neuropeptide</fullName>
    </alternativeName>
    <alternativeName>
        <fullName evidence="3 4">Peak C</fullName>
    </alternativeName>
</protein>
<organism>
    <name type="scientific">Macrocallista nimbosa</name>
    <name type="common">Sun-ray clam</name>
    <dbReference type="NCBI Taxonomy" id="6594"/>
    <lineage>
        <taxon>Eukaryota</taxon>
        <taxon>Metazoa</taxon>
        <taxon>Spiralia</taxon>
        <taxon>Lophotrochozoa</taxon>
        <taxon>Mollusca</taxon>
        <taxon>Bivalvia</taxon>
        <taxon>Autobranchia</taxon>
        <taxon>Heteroconchia</taxon>
        <taxon>Euheterodonta</taxon>
        <taxon>Imparidentia</taxon>
        <taxon>Neoheterodontei</taxon>
        <taxon>Venerida</taxon>
        <taxon>Veneroidea</taxon>
        <taxon>Veneridae</taxon>
        <taxon>Macrocallista</taxon>
    </lineage>
</organism>
<proteinExistence type="evidence at protein level"/>
<feature type="peptide" id="PRO_0000043649" description="FMRFamide" evidence="1 2">
    <location>
        <begin position="1"/>
        <end position="4"/>
    </location>
</feature>
<feature type="modified residue" description="Phenylalanine amide" evidence="1">
    <location>
        <position position="4"/>
    </location>
</feature>
<evidence type="ECO:0000269" key="1">
    <source>
    </source>
</evidence>
<evidence type="ECO:0000269" key="2">
    <source>
    </source>
</evidence>
<evidence type="ECO:0000303" key="3">
    <source>
    </source>
</evidence>
<evidence type="ECO:0000303" key="4">
    <source>
    </source>
</evidence>
<evidence type="ECO:0000305" key="5"/>
<dbReference type="PIR" id="A01426">
    <property type="entry name" value="ECNK"/>
</dbReference>
<dbReference type="SMR" id="P69145"/>
<dbReference type="GO" id="GO:0005576">
    <property type="term" value="C:extracellular region"/>
    <property type="evidence" value="ECO:0007669"/>
    <property type="project" value="UniProtKB-SubCell"/>
</dbReference>
<dbReference type="GO" id="GO:0007218">
    <property type="term" value="P:neuropeptide signaling pathway"/>
    <property type="evidence" value="ECO:0007669"/>
    <property type="project" value="UniProtKB-KW"/>
</dbReference>
<comment type="function">
    <text evidence="1 2">Myoactive; cardioexcitatory substance. Pharmacological activities include augmentation, induction, and regularization of cardiac contraction.</text>
</comment>
<comment type="subcellular location">
    <subcellularLocation>
        <location evidence="1 2">Secreted</location>
    </subcellularLocation>
</comment>
<comment type="similarity">
    <text evidence="5">Belongs to the FARP (FMRFamide related peptide) family.</text>
</comment>